<keyword id="KW-0548">Nucleotidyltransferase</keyword>
<keyword id="KW-1185">Reference proteome</keyword>
<keyword id="KW-0694">RNA-binding</keyword>
<keyword id="KW-0698">rRNA processing</keyword>
<keyword id="KW-0808">Transferase</keyword>
<keyword id="KW-0819">tRNA processing</keyword>
<keyword id="KW-0820">tRNA-binding</keyword>
<dbReference type="EC" id="2.7.7.56" evidence="1"/>
<dbReference type="EMBL" id="CP000002">
    <property type="protein sequence ID" value="AAU24491.2"/>
    <property type="molecule type" value="Genomic_DNA"/>
</dbReference>
<dbReference type="EMBL" id="AE017333">
    <property type="protein sequence ID" value="AAU41852.1"/>
    <property type="molecule type" value="Genomic_DNA"/>
</dbReference>
<dbReference type="RefSeq" id="WP_009329330.1">
    <property type="nucleotide sequence ID" value="NC_006322.1"/>
</dbReference>
<dbReference type="SMR" id="Q65GG2"/>
<dbReference type="STRING" id="279010.BL00312"/>
<dbReference type="GeneID" id="92860423"/>
<dbReference type="KEGG" id="bld:BLi02985"/>
<dbReference type="KEGG" id="bli:BL00312"/>
<dbReference type="eggNOG" id="COG0689">
    <property type="taxonomic scope" value="Bacteria"/>
</dbReference>
<dbReference type="HOGENOM" id="CLU_050858_0_0_9"/>
<dbReference type="Proteomes" id="UP000000606">
    <property type="component" value="Chromosome"/>
</dbReference>
<dbReference type="GO" id="GO:0000175">
    <property type="term" value="F:3'-5'-RNA exonuclease activity"/>
    <property type="evidence" value="ECO:0007669"/>
    <property type="project" value="UniProtKB-UniRule"/>
</dbReference>
<dbReference type="GO" id="GO:0000049">
    <property type="term" value="F:tRNA binding"/>
    <property type="evidence" value="ECO:0007669"/>
    <property type="project" value="UniProtKB-UniRule"/>
</dbReference>
<dbReference type="GO" id="GO:0009022">
    <property type="term" value="F:tRNA nucleotidyltransferase activity"/>
    <property type="evidence" value="ECO:0007669"/>
    <property type="project" value="UniProtKB-UniRule"/>
</dbReference>
<dbReference type="GO" id="GO:0016075">
    <property type="term" value="P:rRNA catabolic process"/>
    <property type="evidence" value="ECO:0007669"/>
    <property type="project" value="UniProtKB-UniRule"/>
</dbReference>
<dbReference type="GO" id="GO:0006364">
    <property type="term" value="P:rRNA processing"/>
    <property type="evidence" value="ECO:0007669"/>
    <property type="project" value="UniProtKB-KW"/>
</dbReference>
<dbReference type="GO" id="GO:0008033">
    <property type="term" value="P:tRNA processing"/>
    <property type="evidence" value="ECO:0007669"/>
    <property type="project" value="UniProtKB-UniRule"/>
</dbReference>
<dbReference type="CDD" id="cd11362">
    <property type="entry name" value="RNase_PH_bact"/>
    <property type="match status" value="1"/>
</dbReference>
<dbReference type="FunFam" id="3.30.230.70:FF:000003">
    <property type="entry name" value="Ribonuclease PH"/>
    <property type="match status" value="1"/>
</dbReference>
<dbReference type="Gene3D" id="3.30.230.70">
    <property type="entry name" value="GHMP Kinase, N-terminal domain"/>
    <property type="match status" value="1"/>
</dbReference>
<dbReference type="HAMAP" id="MF_00564">
    <property type="entry name" value="RNase_PH"/>
    <property type="match status" value="1"/>
</dbReference>
<dbReference type="InterPro" id="IPR001247">
    <property type="entry name" value="ExoRNase_PH_dom1"/>
</dbReference>
<dbReference type="InterPro" id="IPR015847">
    <property type="entry name" value="ExoRNase_PH_dom2"/>
</dbReference>
<dbReference type="InterPro" id="IPR036345">
    <property type="entry name" value="ExoRNase_PH_dom2_sf"/>
</dbReference>
<dbReference type="InterPro" id="IPR027408">
    <property type="entry name" value="PNPase/RNase_PH_dom_sf"/>
</dbReference>
<dbReference type="InterPro" id="IPR020568">
    <property type="entry name" value="Ribosomal_Su5_D2-typ_SF"/>
</dbReference>
<dbReference type="InterPro" id="IPR050080">
    <property type="entry name" value="RNase_PH"/>
</dbReference>
<dbReference type="InterPro" id="IPR002381">
    <property type="entry name" value="RNase_PH_bac-type"/>
</dbReference>
<dbReference type="InterPro" id="IPR018336">
    <property type="entry name" value="RNase_PH_CS"/>
</dbReference>
<dbReference type="NCBIfam" id="TIGR01966">
    <property type="entry name" value="RNasePH"/>
    <property type="match status" value="1"/>
</dbReference>
<dbReference type="PANTHER" id="PTHR11953">
    <property type="entry name" value="EXOSOME COMPLEX COMPONENT"/>
    <property type="match status" value="1"/>
</dbReference>
<dbReference type="PANTHER" id="PTHR11953:SF0">
    <property type="entry name" value="EXOSOME COMPLEX COMPONENT RRP41"/>
    <property type="match status" value="1"/>
</dbReference>
<dbReference type="Pfam" id="PF01138">
    <property type="entry name" value="RNase_PH"/>
    <property type="match status" value="1"/>
</dbReference>
<dbReference type="Pfam" id="PF03725">
    <property type="entry name" value="RNase_PH_C"/>
    <property type="match status" value="1"/>
</dbReference>
<dbReference type="SUPFAM" id="SSF55666">
    <property type="entry name" value="Ribonuclease PH domain 2-like"/>
    <property type="match status" value="1"/>
</dbReference>
<dbReference type="SUPFAM" id="SSF54211">
    <property type="entry name" value="Ribosomal protein S5 domain 2-like"/>
    <property type="match status" value="1"/>
</dbReference>
<dbReference type="PROSITE" id="PS01277">
    <property type="entry name" value="RIBONUCLEASE_PH"/>
    <property type="match status" value="1"/>
</dbReference>
<reference key="1">
    <citation type="journal article" date="2004" name="J. Mol. Microbiol. Biotechnol.">
        <title>The complete genome sequence of Bacillus licheniformis DSM13, an organism with great industrial potential.</title>
        <authorList>
            <person name="Veith B."/>
            <person name="Herzberg C."/>
            <person name="Steckel S."/>
            <person name="Feesche J."/>
            <person name="Maurer K.H."/>
            <person name="Ehrenreich P."/>
            <person name="Baeumer S."/>
            <person name="Henne A."/>
            <person name="Liesegang H."/>
            <person name="Merkl R."/>
            <person name="Ehrenreich A."/>
            <person name="Gottschalk G."/>
        </authorList>
    </citation>
    <scope>NUCLEOTIDE SEQUENCE [LARGE SCALE GENOMIC DNA]</scope>
    <source>
        <strain>ATCC 14580 / DSM 13 / JCM 2505 / CCUG 7422 / NBRC 12200 / NCIMB 9375 / NCTC 10341 / NRRL NRS-1264 / Gibson 46</strain>
    </source>
</reference>
<reference key="2">
    <citation type="journal article" date="2004" name="Genome Biol.">
        <title>Complete genome sequence of the industrial bacterium Bacillus licheniformis and comparisons with closely related Bacillus species.</title>
        <authorList>
            <person name="Rey M.W."/>
            <person name="Ramaiya P."/>
            <person name="Nelson B.A."/>
            <person name="Brody-Karpin S.D."/>
            <person name="Zaretsky E.J."/>
            <person name="Tang M."/>
            <person name="Lopez de Leon A."/>
            <person name="Xiang H."/>
            <person name="Gusti V."/>
            <person name="Clausen I.G."/>
            <person name="Olsen P.B."/>
            <person name="Rasmussen M.D."/>
            <person name="Andersen J.T."/>
            <person name="Joergensen P.L."/>
            <person name="Larsen T.S."/>
            <person name="Sorokin A."/>
            <person name="Bolotin A."/>
            <person name="Lapidus A."/>
            <person name="Galleron N."/>
            <person name="Ehrlich S.D."/>
            <person name="Berka R.M."/>
        </authorList>
    </citation>
    <scope>NUCLEOTIDE SEQUENCE [LARGE SCALE GENOMIC DNA]</scope>
    <source>
        <strain>ATCC 14580 / DSM 13 / JCM 2505 / CCUG 7422 / NBRC 12200 / NCIMB 9375 / NCTC 10341 / NRRL NRS-1264 / Gibson 46</strain>
    </source>
</reference>
<comment type="function">
    <text evidence="1">Phosphorolytic 3'-5' exoribonuclease that plays an important role in tRNA 3'-end maturation. Removes nucleotide residues following the 3'-CCA terminus of tRNAs; can also add nucleotides to the ends of RNA molecules by using nucleoside diphosphates as substrates, but this may not be physiologically important. Probably plays a role in initiation of 16S rRNA degradation (leading to ribosome degradation) during starvation.</text>
</comment>
<comment type="catalytic activity">
    <reaction evidence="1">
        <text>tRNA(n+1) + phosphate = tRNA(n) + a ribonucleoside 5'-diphosphate</text>
        <dbReference type="Rhea" id="RHEA:10628"/>
        <dbReference type="Rhea" id="RHEA-COMP:17343"/>
        <dbReference type="Rhea" id="RHEA-COMP:17344"/>
        <dbReference type="ChEBI" id="CHEBI:43474"/>
        <dbReference type="ChEBI" id="CHEBI:57930"/>
        <dbReference type="ChEBI" id="CHEBI:173114"/>
        <dbReference type="EC" id="2.7.7.56"/>
    </reaction>
</comment>
<comment type="subunit">
    <text evidence="1">Homohexameric ring arranged as a trimer of dimers.</text>
</comment>
<comment type="similarity">
    <text evidence="1">Belongs to the RNase PH family.</text>
</comment>
<organism>
    <name type="scientific">Bacillus licheniformis (strain ATCC 14580 / DSM 13 / JCM 2505 / CCUG 7422 / NBRC 12200 / NCIMB 9375 / NCTC 10341 / NRRL NRS-1264 / Gibson 46)</name>
    <dbReference type="NCBI Taxonomy" id="279010"/>
    <lineage>
        <taxon>Bacteria</taxon>
        <taxon>Bacillati</taxon>
        <taxon>Bacillota</taxon>
        <taxon>Bacilli</taxon>
        <taxon>Bacillales</taxon>
        <taxon>Bacillaceae</taxon>
        <taxon>Bacillus</taxon>
    </lineage>
</organism>
<accession>Q65GG2</accession>
<accession>Q62RW9</accession>
<name>RNPH_BACLD</name>
<proteinExistence type="inferred from homology"/>
<protein>
    <recommendedName>
        <fullName evidence="1">Ribonuclease PH</fullName>
        <shortName evidence="1">RNase PH</shortName>
        <ecNumber evidence="1">2.7.7.56</ecNumber>
    </recommendedName>
    <alternativeName>
        <fullName evidence="1">tRNA nucleotidyltransferase</fullName>
    </alternativeName>
</protein>
<evidence type="ECO:0000255" key="1">
    <source>
        <dbReference type="HAMAP-Rule" id="MF_00564"/>
    </source>
</evidence>
<feature type="chain" id="PRO_1000024777" description="Ribonuclease PH">
    <location>
        <begin position="1"/>
        <end position="246"/>
    </location>
</feature>
<feature type="binding site" evidence="1">
    <location>
        <position position="86"/>
    </location>
    <ligand>
        <name>phosphate</name>
        <dbReference type="ChEBI" id="CHEBI:43474"/>
        <note>substrate</note>
    </ligand>
</feature>
<feature type="binding site" evidence="1">
    <location>
        <begin position="124"/>
        <end position="126"/>
    </location>
    <ligand>
        <name>phosphate</name>
        <dbReference type="ChEBI" id="CHEBI:43474"/>
        <note>substrate</note>
    </ligand>
</feature>
<gene>
    <name evidence="1" type="primary">rph</name>
    <name type="ordered locus">BLi02985</name>
    <name type="ordered locus">BL00312</name>
</gene>
<sequence length="246" mass="26845">MRYDGRKNNELRPVTMDLDFITHPEGSVLITVGGTKVICNASVEDRVPPFLRGEGKGWITAEYSMLPRATNQRTIRESSKGKISGRTMEIQRLIGRALRAVVDLEKLGERTIWIDCDVIQADGGTRTASITGAFTAMALAVGRLVEKGALKEMPITDFLAATSVGIDKEKGLILDLNYQEDSAAEVDMNVVMTGEGRFVELQGTGEEATFSRSELDGLLELAEKGIAELLEKQKEVLGDVALSIQQ</sequence>